<proteinExistence type="inferred from homology"/>
<keyword id="KW-0963">Cytoplasm</keyword>
<keyword id="KW-0227">DNA damage</keyword>
<keyword id="KW-0228">DNA excision</keyword>
<keyword id="KW-0234">DNA repair</keyword>
<keyword id="KW-0267">Excision nuclease</keyword>
<keyword id="KW-1185">Reference proteome</keyword>
<keyword id="KW-0742">SOS response</keyword>
<gene>
    <name evidence="1" type="primary">uvrC</name>
    <name type="ordered locus">SUB1056</name>
</gene>
<sequence>MNELIKYKLELLPDSPGCYLHKDKHGTIIYVGKAKNLRNRVRSYFRGSHDTKTEMLVSEIEDFEFIVTGSNTEALLLEINLIQKNMPKYNIKLKDDKSYPFIKITNEPFPRLLITRQIKKQDGLYFGPYPDSYTANEVKKLLDRIFPFKKCKNPINKVCFYYHLGQCNAHSICQTDKAYWDGLVEDVKLFLTGKDDKIVTGLKEKMLAASQAMEFERAAEYRDLISGIATLRTKQRIMSKDLQDRDIFGYYVDKGWMCVQVFFVRQGKLIQRDVNMFPYYNEAEEDFLTYIGQFYLDQKHFLPKEVFIPDTIDQDLVQAVVPTKIVKPQRGEKKQLVALATKNARVSLQQKFDLLEKDLRKTKGAIDHLGQLLQIDRPYRIEAFDNSNIQGTSPVAAMVVFKDGKPSKKDYRKFKIKTVTGPDDYASMREVIFRRYSRVLKDKLEMPDLIIIDGGQGQVNVAKDVIENQLGLQIPIAGLQKNDRHQTHELLFGDPLEVVELPRNSEEFFLLHRIQDEVHRFAITFHRQVRSKNSFSSKLDGIEGLGPKRKQALLKHFKNMTAISQASVDEVRSLGIPEKVAQALLDSFNEV</sequence>
<organism>
    <name type="scientific">Streptococcus uberis (strain ATCC BAA-854 / 0140J)</name>
    <dbReference type="NCBI Taxonomy" id="218495"/>
    <lineage>
        <taxon>Bacteria</taxon>
        <taxon>Bacillati</taxon>
        <taxon>Bacillota</taxon>
        <taxon>Bacilli</taxon>
        <taxon>Lactobacillales</taxon>
        <taxon>Streptococcaceae</taxon>
        <taxon>Streptococcus</taxon>
    </lineage>
</organism>
<dbReference type="EMBL" id="AM946015">
    <property type="protein sequence ID" value="CAR42347.1"/>
    <property type="molecule type" value="Genomic_DNA"/>
</dbReference>
<dbReference type="RefSeq" id="WP_012658550.1">
    <property type="nucleotide sequence ID" value="NC_012004.1"/>
</dbReference>
<dbReference type="SMR" id="B9DUK9"/>
<dbReference type="STRING" id="218495.SUB1056"/>
<dbReference type="KEGG" id="sub:SUB1056"/>
<dbReference type="eggNOG" id="COG0322">
    <property type="taxonomic scope" value="Bacteria"/>
</dbReference>
<dbReference type="HOGENOM" id="CLU_014841_3_2_9"/>
<dbReference type="OrthoDB" id="9804933at2"/>
<dbReference type="Proteomes" id="UP000000449">
    <property type="component" value="Chromosome"/>
</dbReference>
<dbReference type="GO" id="GO:0005737">
    <property type="term" value="C:cytoplasm"/>
    <property type="evidence" value="ECO:0007669"/>
    <property type="project" value="UniProtKB-SubCell"/>
</dbReference>
<dbReference type="GO" id="GO:0009380">
    <property type="term" value="C:excinuclease repair complex"/>
    <property type="evidence" value="ECO:0007669"/>
    <property type="project" value="InterPro"/>
</dbReference>
<dbReference type="GO" id="GO:0003677">
    <property type="term" value="F:DNA binding"/>
    <property type="evidence" value="ECO:0007669"/>
    <property type="project" value="UniProtKB-UniRule"/>
</dbReference>
<dbReference type="GO" id="GO:0009381">
    <property type="term" value="F:excinuclease ABC activity"/>
    <property type="evidence" value="ECO:0007669"/>
    <property type="project" value="UniProtKB-UniRule"/>
</dbReference>
<dbReference type="GO" id="GO:0006289">
    <property type="term" value="P:nucleotide-excision repair"/>
    <property type="evidence" value="ECO:0007669"/>
    <property type="project" value="UniProtKB-UniRule"/>
</dbReference>
<dbReference type="GO" id="GO:0009432">
    <property type="term" value="P:SOS response"/>
    <property type="evidence" value="ECO:0007669"/>
    <property type="project" value="UniProtKB-UniRule"/>
</dbReference>
<dbReference type="CDD" id="cd10434">
    <property type="entry name" value="GIY-YIG_UvrC_Cho"/>
    <property type="match status" value="1"/>
</dbReference>
<dbReference type="FunFam" id="3.30.420.340:FF:000002">
    <property type="entry name" value="UvrABC system protein C"/>
    <property type="match status" value="1"/>
</dbReference>
<dbReference type="FunFam" id="3.40.1440.10:FF:000001">
    <property type="entry name" value="UvrABC system protein C"/>
    <property type="match status" value="1"/>
</dbReference>
<dbReference type="Gene3D" id="1.10.150.20">
    <property type="entry name" value="5' to 3' exonuclease, C-terminal subdomain"/>
    <property type="match status" value="1"/>
</dbReference>
<dbReference type="Gene3D" id="3.40.1440.10">
    <property type="entry name" value="GIY-YIG endonuclease"/>
    <property type="match status" value="1"/>
</dbReference>
<dbReference type="Gene3D" id="4.10.860.10">
    <property type="entry name" value="UVR domain"/>
    <property type="match status" value="1"/>
</dbReference>
<dbReference type="Gene3D" id="3.30.420.340">
    <property type="entry name" value="UvrC, RNAse H endonuclease domain"/>
    <property type="match status" value="1"/>
</dbReference>
<dbReference type="HAMAP" id="MF_00203">
    <property type="entry name" value="UvrC"/>
    <property type="match status" value="1"/>
</dbReference>
<dbReference type="InterPro" id="IPR000305">
    <property type="entry name" value="GIY-YIG_endonuc"/>
</dbReference>
<dbReference type="InterPro" id="IPR035901">
    <property type="entry name" value="GIY-YIG_endonuc_sf"/>
</dbReference>
<dbReference type="InterPro" id="IPR047296">
    <property type="entry name" value="GIY-YIG_UvrC_Cho"/>
</dbReference>
<dbReference type="InterPro" id="IPR010994">
    <property type="entry name" value="RuvA_2-like"/>
</dbReference>
<dbReference type="InterPro" id="IPR001943">
    <property type="entry name" value="UVR_dom"/>
</dbReference>
<dbReference type="InterPro" id="IPR036876">
    <property type="entry name" value="UVR_dom_sf"/>
</dbReference>
<dbReference type="InterPro" id="IPR050066">
    <property type="entry name" value="UvrABC_protein_C"/>
</dbReference>
<dbReference type="InterPro" id="IPR004791">
    <property type="entry name" value="UvrC"/>
</dbReference>
<dbReference type="InterPro" id="IPR001162">
    <property type="entry name" value="UvrC_RNase_H_dom"/>
</dbReference>
<dbReference type="InterPro" id="IPR038476">
    <property type="entry name" value="UvrC_RNase_H_dom_sf"/>
</dbReference>
<dbReference type="NCBIfam" id="TIGR00194">
    <property type="entry name" value="uvrC"/>
    <property type="match status" value="1"/>
</dbReference>
<dbReference type="PANTHER" id="PTHR30562:SF1">
    <property type="entry name" value="UVRABC SYSTEM PROTEIN C"/>
    <property type="match status" value="1"/>
</dbReference>
<dbReference type="PANTHER" id="PTHR30562">
    <property type="entry name" value="UVRC/OXIDOREDUCTASE"/>
    <property type="match status" value="1"/>
</dbReference>
<dbReference type="Pfam" id="PF01541">
    <property type="entry name" value="GIY-YIG"/>
    <property type="match status" value="1"/>
</dbReference>
<dbReference type="Pfam" id="PF14520">
    <property type="entry name" value="HHH_5"/>
    <property type="match status" value="1"/>
</dbReference>
<dbReference type="Pfam" id="PF02151">
    <property type="entry name" value="UVR"/>
    <property type="match status" value="1"/>
</dbReference>
<dbReference type="Pfam" id="PF22920">
    <property type="entry name" value="UvrC_RNaseH"/>
    <property type="match status" value="1"/>
</dbReference>
<dbReference type="Pfam" id="PF08459">
    <property type="entry name" value="UvrC_RNaseH_dom"/>
    <property type="match status" value="1"/>
</dbReference>
<dbReference type="SMART" id="SM00465">
    <property type="entry name" value="GIYc"/>
    <property type="match status" value="1"/>
</dbReference>
<dbReference type="SUPFAM" id="SSF46600">
    <property type="entry name" value="C-terminal UvrC-binding domain of UvrB"/>
    <property type="match status" value="1"/>
</dbReference>
<dbReference type="SUPFAM" id="SSF82771">
    <property type="entry name" value="GIY-YIG endonuclease"/>
    <property type="match status" value="1"/>
</dbReference>
<dbReference type="SUPFAM" id="SSF47781">
    <property type="entry name" value="RuvA domain 2-like"/>
    <property type="match status" value="1"/>
</dbReference>
<dbReference type="PROSITE" id="PS50164">
    <property type="entry name" value="GIY_YIG"/>
    <property type="match status" value="1"/>
</dbReference>
<dbReference type="PROSITE" id="PS50151">
    <property type="entry name" value="UVR"/>
    <property type="match status" value="1"/>
</dbReference>
<dbReference type="PROSITE" id="PS50165">
    <property type="entry name" value="UVRC"/>
    <property type="match status" value="1"/>
</dbReference>
<accession>B9DUK9</accession>
<feature type="chain" id="PRO_1000200607" description="UvrABC system protein C">
    <location>
        <begin position="1"/>
        <end position="591"/>
    </location>
</feature>
<feature type="domain" description="GIY-YIG" evidence="1">
    <location>
        <begin position="14"/>
        <end position="91"/>
    </location>
</feature>
<feature type="domain" description="UVR" evidence="1">
    <location>
        <begin position="196"/>
        <end position="231"/>
    </location>
</feature>
<reference key="1">
    <citation type="journal article" date="2009" name="BMC Genomics">
        <title>Evidence for niche adaptation in the genome of the bovine pathogen Streptococcus uberis.</title>
        <authorList>
            <person name="Ward P.N."/>
            <person name="Holden M.T.G."/>
            <person name="Leigh J.A."/>
            <person name="Lennard N."/>
            <person name="Bignell A."/>
            <person name="Barron A."/>
            <person name="Clark L."/>
            <person name="Quail M.A."/>
            <person name="Woodward J."/>
            <person name="Barrell B.G."/>
            <person name="Egan S.A."/>
            <person name="Field T.R."/>
            <person name="Maskell D."/>
            <person name="Kehoe M."/>
            <person name="Dowson C.G."/>
            <person name="Chanter N."/>
            <person name="Whatmore A.M."/>
            <person name="Bentley S.D."/>
            <person name="Parkhill J."/>
        </authorList>
    </citation>
    <scope>NUCLEOTIDE SEQUENCE [LARGE SCALE GENOMIC DNA]</scope>
    <source>
        <strain>ATCC BAA-854 / 0140J</strain>
    </source>
</reference>
<evidence type="ECO:0000255" key="1">
    <source>
        <dbReference type="HAMAP-Rule" id="MF_00203"/>
    </source>
</evidence>
<comment type="function">
    <text evidence="1">The UvrABC repair system catalyzes the recognition and processing of DNA lesions. UvrC both incises the 5' and 3' sides of the lesion. The N-terminal half is responsible for the 3' incision and the C-terminal half is responsible for the 5' incision.</text>
</comment>
<comment type="subunit">
    <text evidence="1">Interacts with UvrB in an incision complex.</text>
</comment>
<comment type="subcellular location">
    <subcellularLocation>
        <location evidence="1">Cytoplasm</location>
    </subcellularLocation>
</comment>
<comment type="similarity">
    <text evidence="1">Belongs to the UvrC family.</text>
</comment>
<name>UVRC_STRU0</name>
<protein>
    <recommendedName>
        <fullName evidence="1">UvrABC system protein C</fullName>
        <shortName evidence="1">Protein UvrC</shortName>
    </recommendedName>
    <alternativeName>
        <fullName evidence="1">Excinuclease ABC subunit C</fullName>
    </alternativeName>
</protein>